<evidence type="ECO:0000255" key="1">
    <source>
        <dbReference type="HAMAP-Rule" id="MF_00149"/>
    </source>
</evidence>
<comment type="function">
    <text evidence="1">This protein is involved in the repair of mismatches in DNA. It is required for dam-dependent methyl-directed DNA mismatch repair. May act as a 'molecular matchmaker', a protein that promotes the formation of a stable complex between two or more DNA-binding proteins in an ATP-dependent manner without itself being part of a final effector complex.</text>
</comment>
<comment type="similarity">
    <text evidence="1">Belongs to the DNA mismatch repair MutL/HexB family.</text>
</comment>
<proteinExistence type="inferred from homology"/>
<reference key="1">
    <citation type="submission" date="2005-08" db="EMBL/GenBank/DDBJ databases">
        <title>Complete sequence of Pelodictyon luteolum DSM 273.</title>
        <authorList>
            <consortium name="US DOE Joint Genome Institute"/>
            <person name="Copeland A."/>
            <person name="Lucas S."/>
            <person name="Lapidus A."/>
            <person name="Barry K."/>
            <person name="Detter J.C."/>
            <person name="Glavina T."/>
            <person name="Hammon N."/>
            <person name="Israni S."/>
            <person name="Pitluck S."/>
            <person name="Bryant D."/>
            <person name="Schmutz J."/>
            <person name="Larimer F."/>
            <person name="Land M."/>
            <person name="Kyrpides N."/>
            <person name="Ivanova N."/>
            <person name="Richardson P."/>
        </authorList>
    </citation>
    <scope>NUCLEOTIDE SEQUENCE [LARGE SCALE GENOMIC DNA]</scope>
    <source>
        <strain>DSM 273 / BCRC 81028 / 2530</strain>
    </source>
</reference>
<organism>
    <name type="scientific">Chlorobium luteolum (strain DSM 273 / BCRC 81028 / 2530)</name>
    <name type="common">Pelodictyon luteolum</name>
    <dbReference type="NCBI Taxonomy" id="319225"/>
    <lineage>
        <taxon>Bacteria</taxon>
        <taxon>Pseudomonadati</taxon>
        <taxon>Chlorobiota</taxon>
        <taxon>Chlorobiia</taxon>
        <taxon>Chlorobiales</taxon>
        <taxon>Chlorobiaceae</taxon>
        <taxon>Chlorobium/Pelodictyon group</taxon>
        <taxon>Pelodictyon</taxon>
    </lineage>
</organism>
<dbReference type="EMBL" id="CP000096">
    <property type="protein sequence ID" value="ABB24823.1"/>
    <property type="molecule type" value="Genomic_DNA"/>
</dbReference>
<dbReference type="RefSeq" id="WP_011358693.1">
    <property type="nucleotide sequence ID" value="NC_007512.1"/>
</dbReference>
<dbReference type="SMR" id="Q3B1F8"/>
<dbReference type="STRING" id="319225.Plut_1981"/>
<dbReference type="KEGG" id="plt:Plut_1981"/>
<dbReference type="eggNOG" id="COG0323">
    <property type="taxonomic scope" value="Bacteria"/>
</dbReference>
<dbReference type="HOGENOM" id="CLU_004131_4_0_10"/>
<dbReference type="OrthoDB" id="9763467at2"/>
<dbReference type="Proteomes" id="UP000002709">
    <property type="component" value="Chromosome"/>
</dbReference>
<dbReference type="GO" id="GO:0032300">
    <property type="term" value="C:mismatch repair complex"/>
    <property type="evidence" value="ECO:0007669"/>
    <property type="project" value="InterPro"/>
</dbReference>
<dbReference type="GO" id="GO:0005524">
    <property type="term" value="F:ATP binding"/>
    <property type="evidence" value="ECO:0007669"/>
    <property type="project" value="InterPro"/>
</dbReference>
<dbReference type="GO" id="GO:0016887">
    <property type="term" value="F:ATP hydrolysis activity"/>
    <property type="evidence" value="ECO:0007669"/>
    <property type="project" value="InterPro"/>
</dbReference>
<dbReference type="GO" id="GO:0140664">
    <property type="term" value="F:ATP-dependent DNA damage sensor activity"/>
    <property type="evidence" value="ECO:0007669"/>
    <property type="project" value="InterPro"/>
</dbReference>
<dbReference type="GO" id="GO:0030983">
    <property type="term" value="F:mismatched DNA binding"/>
    <property type="evidence" value="ECO:0007669"/>
    <property type="project" value="InterPro"/>
</dbReference>
<dbReference type="GO" id="GO:0006298">
    <property type="term" value="P:mismatch repair"/>
    <property type="evidence" value="ECO:0007669"/>
    <property type="project" value="UniProtKB-UniRule"/>
</dbReference>
<dbReference type="CDD" id="cd16926">
    <property type="entry name" value="HATPase_MutL-MLH-PMS-like"/>
    <property type="match status" value="1"/>
</dbReference>
<dbReference type="CDD" id="cd00782">
    <property type="entry name" value="MutL_Trans"/>
    <property type="match status" value="1"/>
</dbReference>
<dbReference type="FunFam" id="3.30.565.10:FF:000003">
    <property type="entry name" value="DNA mismatch repair endonuclease MutL"/>
    <property type="match status" value="1"/>
</dbReference>
<dbReference type="Gene3D" id="3.30.230.10">
    <property type="match status" value="1"/>
</dbReference>
<dbReference type="Gene3D" id="3.30.565.10">
    <property type="entry name" value="Histidine kinase-like ATPase, C-terminal domain"/>
    <property type="match status" value="1"/>
</dbReference>
<dbReference type="Gene3D" id="3.30.1540.20">
    <property type="entry name" value="MutL, C-terminal domain, dimerisation subdomain"/>
    <property type="match status" value="1"/>
</dbReference>
<dbReference type="Gene3D" id="3.30.1370.100">
    <property type="entry name" value="MutL, C-terminal domain, regulatory subdomain"/>
    <property type="match status" value="1"/>
</dbReference>
<dbReference type="HAMAP" id="MF_00149">
    <property type="entry name" value="DNA_mis_repair"/>
    <property type="match status" value="1"/>
</dbReference>
<dbReference type="InterPro" id="IPR014762">
    <property type="entry name" value="DNA_mismatch_repair_CS"/>
</dbReference>
<dbReference type="InterPro" id="IPR020667">
    <property type="entry name" value="DNA_mismatch_repair_MutL"/>
</dbReference>
<dbReference type="InterPro" id="IPR013507">
    <property type="entry name" value="DNA_mismatch_S5_2-like"/>
</dbReference>
<dbReference type="InterPro" id="IPR036890">
    <property type="entry name" value="HATPase_C_sf"/>
</dbReference>
<dbReference type="InterPro" id="IPR002099">
    <property type="entry name" value="MutL/Mlh/PMS"/>
</dbReference>
<dbReference type="InterPro" id="IPR038973">
    <property type="entry name" value="MutL/Mlh/Pms-like"/>
</dbReference>
<dbReference type="InterPro" id="IPR014790">
    <property type="entry name" value="MutL_C"/>
</dbReference>
<dbReference type="InterPro" id="IPR042120">
    <property type="entry name" value="MutL_C_dimsub"/>
</dbReference>
<dbReference type="InterPro" id="IPR042121">
    <property type="entry name" value="MutL_C_regsub"/>
</dbReference>
<dbReference type="InterPro" id="IPR037198">
    <property type="entry name" value="MutL_C_sf"/>
</dbReference>
<dbReference type="InterPro" id="IPR020568">
    <property type="entry name" value="Ribosomal_Su5_D2-typ_SF"/>
</dbReference>
<dbReference type="InterPro" id="IPR014721">
    <property type="entry name" value="Ribsml_uS5_D2-typ_fold_subgr"/>
</dbReference>
<dbReference type="NCBIfam" id="TIGR00585">
    <property type="entry name" value="mutl"/>
    <property type="match status" value="1"/>
</dbReference>
<dbReference type="PANTHER" id="PTHR10073">
    <property type="entry name" value="DNA MISMATCH REPAIR PROTEIN MLH, PMS, MUTL"/>
    <property type="match status" value="1"/>
</dbReference>
<dbReference type="PANTHER" id="PTHR10073:SF12">
    <property type="entry name" value="DNA MISMATCH REPAIR PROTEIN MLH1"/>
    <property type="match status" value="1"/>
</dbReference>
<dbReference type="Pfam" id="PF01119">
    <property type="entry name" value="DNA_mis_repair"/>
    <property type="match status" value="1"/>
</dbReference>
<dbReference type="Pfam" id="PF13589">
    <property type="entry name" value="HATPase_c_3"/>
    <property type="match status" value="1"/>
</dbReference>
<dbReference type="Pfam" id="PF08676">
    <property type="entry name" value="MutL_C"/>
    <property type="match status" value="1"/>
</dbReference>
<dbReference type="SMART" id="SM01340">
    <property type="entry name" value="DNA_mis_repair"/>
    <property type="match status" value="1"/>
</dbReference>
<dbReference type="SMART" id="SM00853">
    <property type="entry name" value="MutL_C"/>
    <property type="match status" value="1"/>
</dbReference>
<dbReference type="SUPFAM" id="SSF55874">
    <property type="entry name" value="ATPase domain of HSP90 chaperone/DNA topoisomerase II/histidine kinase"/>
    <property type="match status" value="1"/>
</dbReference>
<dbReference type="SUPFAM" id="SSF118116">
    <property type="entry name" value="DNA mismatch repair protein MutL"/>
    <property type="match status" value="1"/>
</dbReference>
<dbReference type="SUPFAM" id="SSF54211">
    <property type="entry name" value="Ribosomal protein S5 domain 2-like"/>
    <property type="match status" value="1"/>
</dbReference>
<dbReference type="PROSITE" id="PS00058">
    <property type="entry name" value="DNA_MISMATCH_REPAIR_1"/>
    <property type="match status" value="1"/>
</dbReference>
<feature type="chain" id="PRO_1000010054" description="DNA mismatch repair protein MutL">
    <location>
        <begin position="1"/>
        <end position="626"/>
    </location>
</feature>
<name>MUTL_CHLL3</name>
<gene>
    <name evidence="1" type="primary">mutL</name>
    <name type="ordered locus">Plut_1981</name>
</gene>
<accession>Q3B1F8</accession>
<sequence length="626" mass="70697">MPSIARLPDNVANKISAGEVVQRPASVVKELLENAIDSGADRISVVIKDAGRELVRIIDNGRGMSRADALLSVERFATSKLRDVDDLDTLGTLGFRGEALASISSVSHFELRTRMTDAPVALRFRYEGGIAVEESEVQGEAGTSVSVRNLFYNVPARRKFLKSNATEYGHIFELVRSFSLAYPEIQWQLLNDDQELFNFRTSDMLERLDTFYGKGFADSLIEVGEENDYLSIRGYIGRPALQKRKKLDQYFFINRRPIQNRMLTQALQQAYAELLVERQAPFALLFLGIDPSRVDVNVHPAKLEVRFDDERSVRNMFYPVIKRAVTLHDFSPDLAAGGRTSQAGDDSASRGFTHAGGGGFRTLAFQEVPERAITTGELYGSYREGAFGSSRPAVPQPSHQEVMFPVPEVPAAREDISQLLRSSMHEGPEGAGVEPKGEEPKIWQLHNKYLICQIKTGLMIIDQHVAHERVLYERAVEVMESRVPNSQQLLFPQKVEFRPWEYEVFEEIKDDLYRLGFNLRSFGTRAVMIEGVPQDVRPGSEATIMQDMIAEYRENATRLRLERRDNLAKSYSCRNAIMAGQKLSMGEMRTLIDNLFATREPYSCPHGRPVIIKMTLTELDHMFGRS</sequence>
<protein>
    <recommendedName>
        <fullName evidence="1">DNA mismatch repair protein MutL</fullName>
    </recommendedName>
</protein>
<keyword id="KW-0227">DNA damage</keyword>
<keyword id="KW-0234">DNA repair</keyword>
<keyword id="KW-1185">Reference proteome</keyword>